<evidence type="ECO:0000255" key="1">
    <source>
        <dbReference type="HAMAP-Rule" id="MF_01343"/>
    </source>
</evidence>
<evidence type="ECO:0000305" key="2"/>
<gene>
    <name evidence="1" type="primary">rpsO</name>
    <name type="ordered locus">THEYE_A1826</name>
</gene>
<proteinExistence type="inferred from homology"/>
<dbReference type="EMBL" id="CP001147">
    <property type="protein sequence ID" value="ACI22110.1"/>
    <property type="molecule type" value="Genomic_DNA"/>
</dbReference>
<dbReference type="RefSeq" id="WP_012546801.1">
    <property type="nucleotide sequence ID" value="NC_011296.1"/>
</dbReference>
<dbReference type="RefSeq" id="YP_002249617.1">
    <property type="nucleotide sequence ID" value="NC_011296.1"/>
</dbReference>
<dbReference type="SMR" id="B5YHN1"/>
<dbReference type="FunCoup" id="B5YHN1">
    <property type="interactions" value="424"/>
</dbReference>
<dbReference type="STRING" id="289376.THEYE_A1826"/>
<dbReference type="EnsemblBacteria" id="ACI22110">
    <property type="protein sequence ID" value="ACI22110"/>
    <property type="gene ID" value="THEYE_A1826"/>
</dbReference>
<dbReference type="KEGG" id="tye:THEYE_A1826"/>
<dbReference type="PATRIC" id="fig|289376.4.peg.1781"/>
<dbReference type="eggNOG" id="COG0184">
    <property type="taxonomic scope" value="Bacteria"/>
</dbReference>
<dbReference type="HOGENOM" id="CLU_148518_0_0_0"/>
<dbReference type="InParanoid" id="B5YHN1"/>
<dbReference type="OrthoDB" id="9799262at2"/>
<dbReference type="Proteomes" id="UP000000718">
    <property type="component" value="Chromosome"/>
</dbReference>
<dbReference type="GO" id="GO:0022627">
    <property type="term" value="C:cytosolic small ribosomal subunit"/>
    <property type="evidence" value="ECO:0000318"/>
    <property type="project" value="GO_Central"/>
</dbReference>
<dbReference type="GO" id="GO:0019843">
    <property type="term" value="F:rRNA binding"/>
    <property type="evidence" value="ECO:0007669"/>
    <property type="project" value="UniProtKB-UniRule"/>
</dbReference>
<dbReference type="GO" id="GO:0003735">
    <property type="term" value="F:structural constituent of ribosome"/>
    <property type="evidence" value="ECO:0007669"/>
    <property type="project" value="InterPro"/>
</dbReference>
<dbReference type="GO" id="GO:0006412">
    <property type="term" value="P:translation"/>
    <property type="evidence" value="ECO:0007669"/>
    <property type="project" value="UniProtKB-UniRule"/>
</dbReference>
<dbReference type="CDD" id="cd00353">
    <property type="entry name" value="Ribosomal_S15p_S13e"/>
    <property type="match status" value="1"/>
</dbReference>
<dbReference type="FunFam" id="1.10.287.10:FF:000002">
    <property type="entry name" value="30S ribosomal protein S15"/>
    <property type="match status" value="1"/>
</dbReference>
<dbReference type="Gene3D" id="6.10.250.3130">
    <property type="match status" value="1"/>
</dbReference>
<dbReference type="Gene3D" id="1.10.287.10">
    <property type="entry name" value="S15/NS1, RNA-binding"/>
    <property type="match status" value="1"/>
</dbReference>
<dbReference type="HAMAP" id="MF_01343_B">
    <property type="entry name" value="Ribosomal_uS15_B"/>
    <property type="match status" value="1"/>
</dbReference>
<dbReference type="InterPro" id="IPR000589">
    <property type="entry name" value="Ribosomal_uS15"/>
</dbReference>
<dbReference type="InterPro" id="IPR005290">
    <property type="entry name" value="Ribosomal_uS15_bac-type"/>
</dbReference>
<dbReference type="InterPro" id="IPR009068">
    <property type="entry name" value="uS15_NS1_RNA-bd_sf"/>
</dbReference>
<dbReference type="NCBIfam" id="TIGR00952">
    <property type="entry name" value="S15_bact"/>
    <property type="match status" value="1"/>
</dbReference>
<dbReference type="PANTHER" id="PTHR23321">
    <property type="entry name" value="RIBOSOMAL PROTEIN S15, BACTERIAL AND ORGANELLAR"/>
    <property type="match status" value="1"/>
</dbReference>
<dbReference type="PANTHER" id="PTHR23321:SF26">
    <property type="entry name" value="SMALL RIBOSOMAL SUBUNIT PROTEIN US15M"/>
    <property type="match status" value="1"/>
</dbReference>
<dbReference type="Pfam" id="PF00312">
    <property type="entry name" value="Ribosomal_S15"/>
    <property type="match status" value="1"/>
</dbReference>
<dbReference type="SMART" id="SM01387">
    <property type="entry name" value="Ribosomal_S15"/>
    <property type="match status" value="1"/>
</dbReference>
<dbReference type="SUPFAM" id="SSF47060">
    <property type="entry name" value="S15/NS1 RNA-binding domain"/>
    <property type="match status" value="1"/>
</dbReference>
<dbReference type="PROSITE" id="PS00362">
    <property type="entry name" value="RIBOSOMAL_S15"/>
    <property type="match status" value="1"/>
</dbReference>
<feature type="chain" id="PRO_1000143186" description="Small ribosomal subunit protein uS15">
    <location>
        <begin position="1"/>
        <end position="89"/>
    </location>
</feature>
<accession>B5YHN1</accession>
<protein>
    <recommendedName>
        <fullName evidence="1">Small ribosomal subunit protein uS15</fullName>
    </recommendedName>
    <alternativeName>
        <fullName evidence="2">30S ribosomal protein S15</fullName>
    </alternativeName>
</protein>
<comment type="function">
    <text evidence="1">One of the primary rRNA binding proteins, it binds directly to 16S rRNA where it helps nucleate assembly of the platform of the 30S subunit by binding and bridging several RNA helices of the 16S rRNA.</text>
</comment>
<comment type="function">
    <text evidence="1">Forms an intersubunit bridge (bridge B4) with the 23S rRNA of the 50S subunit in the ribosome.</text>
</comment>
<comment type="subunit">
    <text evidence="1">Part of the 30S ribosomal subunit. Forms a bridge to the 50S subunit in the 70S ribosome, contacting the 23S rRNA.</text>
</comment>
<comment type="similarity">
    <text evidence="1">Belongs to the universal ribosomal protein uS15 family.</text>
</comment>
<keyword id="KW-1185">Reference proteome</keyword>
<keyword id="KW-0687">Ribonucleoprotein</keyword>
<keyword id="KW-0689">Ribosomal protein</keyword>
<keyword id="KW-0694">RNA-binding</keyword>
<keyword id="KW-0699">rRNA-binding</keyword>
<name>RS15_THEYD</name>
<sequence>MGISPERKKEIIESFKMHSSDTGSPEVQIALMTERINYLTEHFKTHKKDHHSRRGLIKLVAQRRKLLNYLKKIDKERYGKLIERLSIRK</sequence>
<organism>
    <name type="scientific">Thermodesulfovibrio yellowstonii (strain ATCC 51303 / DSM 11347 / YP87)</name>
    <dbReference type="NCBI Taxonomy" id="289376"/>
    <lineage>
        <taxon>Bacteria</taxon>
        <taxon>Pseudomonadati</taxon>
        <taxon>Nitrospirota</taxon>
        <taxon>Thermodesulfovibrionia</taxon>
        <taxon>Thermodesulfovibrionales</taxon>
        <taxon>Thermodesulfovibrionaceae</taxon>
        <taxon>Thermodesulfovibrio</taxon>
    </lineage>
</organism>
<reference key="1">
    <citation type="submission" date="2008-08" db="EMBL/GenBank/DDBJ databases">
        <title>The complete genome sequence of Thermodesulfovibrio yellowstonii strain ATCC 51303 / DSM 11347 / YP87.</title>
        <authorList>
            <person name="Dodson R.J."/>
            <person name="Durkin A.S."/>
            <person name="Wu M."/>
            <person name="Eisen J."/>
            <person name="Sutton G."/>
        </authorList>
    </citation>
    <scope>NUCLEOTIDE SEQUENCE [LARGE SCALE GENOMIC DNA]</scope>
    <source>
        <strain>ATCC 51303 / DSM 11347 / YP87</strain>
    </source>
</reference>